<feature type="chain" id="PRO_0000342286" description="Protein XNDC1N">
    <location>
        <begin position="1"/>
        <end position="234"/>
    </location>
</feature>
<feature type="splice variant" id="VSP_061370" description="In isoform 2.">
    <original>VDFLAPASGELWDRLRLTCSRPFTRHQS</original>
    <variation>GKEGKSRKDGGGLYEKQRCSTKEDCECY</variation>
    <location>
        <begin position="115"/>
        <end position="142"/>
    </location>
</feature>
<feature type="splice variant" id="VSP_061371" description="In isoform 2.">
    <location>
        <begin position="143"/>
        <end position="234"/>
    </location>
</feature>
<name>XNDC1_HUMAN</name>
<reference key="1">
    <citation type="journal article" date="2004" name="Nat. Genet.">
        <title>Complete sequencing and characterization of 21,243 full-length human cDNAs.</title>
        <authorList>
            <person name="Ota T."/>
            <person name="Suzuki Y."/>
            <person name="Nishikawa T."/>
            <person name="Otsuki T."/>
            <person name="Sugiyama T."/>
            <person name="Irie R."/>
            <person name="Wakamatsu A."/>
            <person name="Hayashi K."/>
            <person name="Sato H."/>
            <person name="Nagai K."/>
            <person name="Kimura K."/>
            <person name="Makita H."/>
            <person name="Sekine M."/>
            <person name="Obayashi M."/>
            <person name="Nishi T."/>
            <person name="Shibahara T."/>
            <person name="Tanaka T."/>
            <person name="Ishii S."/>
            <person name="Yamamoto J."/>
            <person name="Saito K."/>
            <person name="Kawai Y."/>
            <person name="Isono Y."/>
            <person name="Nakamura Y."/>
            <person name="Nagahari K."/>
            <person name="Murakami K."/>
            <person name="Yasuda T."/>
            <person name="Iwayanagi T."/>
            <person name="Wagatsuma M."/>
            <person name="Shiratori A."/>
            <person name="Sudo H."/>
            <person name="Hosoiri T."/>
            <person name="Kaku Y."/>
            <person name="Kodaira H."/>
            <person name="Kondo H."/>
            <person name="Sugawara M."/>
            <person name="Takahashi M."/>
            <person name="Kanda K."/>
            <person name="Yokoi T."/>
            <person name="Furuya T."/>
            <person name="Kikkawa E."/>
            <person name="Omura Y."/>
            <person name="Abe K."/>
            <person name="Kamihara K."/>
            <person name="Katsuta N."/>
            <person name="Sato K."/>
            <person name="Tanikawa M."/>
            <person name="Yamazaki M."/>
            <person name="Ninomiya K."/>
            <person name="Ishibashi T."/>
            <person name="Yamashita H."/>
            <person name="Murakawa K."/>
            <person name="Fujimori K."/>
            <person name="Tanai H."/>
            <person name="Kimata M."/>
            <person name="Watanabe M."/>
            <person name="Hiraoka S."/>
            <person name="Chiba Y."/>
            <person name="Ishida S."/>
            <person name="Ono Y."/>
            <person name="Takiguchi S."/>
            <person name="Watanabe S."/>
            <person name="Yosida M."/>
            <person name="Hotuta T."/>
            <person name="Kusano J."/>
            <person name="Kanehori K."/>
            <person name="Takahashi-Fujii A."/>
            <person name="Hara H."/>
            <person name="Tanase T.-O."/>
            <person name="Nomura Y."/>
            <person name="Togiya S."/>
            <person name="Komai F."/>
            <person name="Hara R."/>
            <person name="Takeuchi K."/>
            <person name="Arita M."/>
            <person name="Imose N."/>
            <person name="Musashino K."/>
            <person name="Yuuki H."/>
            <person name="Oshima A."/>
            <person name="Sasaki N."/>
            <person name="Aotsuka S."/>
            <person name="Yoshikawa Y."/>
            <person name="Matsunawa H."/>
            <person name="Ichihara T."/>
            <person name="Shiohata N."/>
            <person name="Sano S."/>
            <person name="Moriya S."/>
            <person name="Momiyama H."/>
            <person name="Satoh N."/>
            <person name="Takami S."/>
            <person name="Terashima Y."/>
            <person name="Suzuki O."/>
            <person name="Nakagawa S."/>
            <person name="Senoh A."/>
            <person name="Mizoguchi H."/>
            <person name="Goto Y."/>
            <person name="Shimizu F."/>
            <person name="Wakebe H."/>
            <person name="Hishigaki H."/>
            <person name="Watanabe T."/>
            <person name="Sugiyama A."/>
            <person name="Takemoto M."/>
            <person name="Kawakami B."/>
            <person name="Yamazaki M."/>
            <person name="Watanabe K."/>
            <person name="Kumagai A."/>
            <person name="Itakura S."/>
            <person name="Fukuzumi Y."/>
            <person name="Fujimori Y."/>
            <person name="Komiyama M."/>
            <person name="Tashiro H."/>
            <person name="Tanigami A."/>
            <person name="Fujiwara T."/>
            <person name="Ono T."/>
            <person name="Yamada K."/>
            <person name="Fujii Y."/>
            <person name="Ozaki K."/>
            <person name="Hirao M."/>
            <person name="Ohmori Y."/>
            <person name="Kawabata A."/>
            <person name="Hikiji T."/>
            <person name="Kobatake N."/>
            <person name="Inagaki H."/>
            <person name="Ikema Y."/>
            <person name="Okamoto S."/>
            <person name="Okitani R."/>
            <person name="Kawakami T."/>
            <person name="Noguchi S."/>
            <person name="Itoh T."/>
            <person name="Shigeta K."/>
            <person name="Senba T."/>
            <person name="Matsumura K."/>
            <person name="Nakajima Y."/>
            <person name="Mizuno T."/>
            <person name="Morinaga M."/>
            <person name="Sasaki M."/>
            <person name="Togashi T."/>
            <person name="Oyama M."/>
            <person name="Hata H."/>
            <person name="Watanabe M."/>
            <person name="Komatsu T."/>
            <person name="Mizushima-Sugano J."/>
            <person name="Satoh T."/>
            <person name="Shirai Y."/>
            <person name="Takahashi Y."/>
            <person name="Nakagawa K."/>
            <person name="Okumura K."/>
            <person name="Nagase T."/>
            <person name="Nomura N."/>
            <person name="Kikuchi H."/>
            <person name="Masuho Y."/>
            <person name="Yamashita R."/>
            <person name="Nakai K."/>
            <person name="Yada T."/>
            <person name="Nakamura Y."/>
            <person name="Ohara O."/>
            <person name="Isogai T."/>
            <person name="Sugano S."/>
        </authorList>
    </citation>
    <scope>NUCLEOTIDE SEQUENCE [LARGE SCALE MRNA] (ISOFORM 2)</scope>
</reference>
<reference key="2">
    <citation type="journal article" date="2006" name="Nature">
        <title>Human chromosome 11 DNA sequence and analysis including novel gene identification.</title>
        <authorList>
            <person name="Taylor T.D."/>
            <person name="Noguchi H."/>
            <person name="Totoki Y."/>
            <person name="Toyoda A."/>
            <person name="Kuroki Y."/>
            <person name="Dewar K."/>
            <person name="Lloyd C."/>
            <person name="Itoh T."/>
            <person name="Takeda T."/>
            <person name="Kim D.-W."/>
            <person name="She X."/>
            <person name="Barlow K.F."/>
            <person name="Bloom T."/>
            <person name="Bruford E."/>
            <person name="Chang J.L."/>
            <person name="Cuomo C.A."/>
            <person name="Eichler E."/>
            <person name="FitzGerald M.G."/>
            <person name="Jaffe D.B."/>
            <person name="LaButti K."/>
            <person name="Nicol R."/>
            <person name="Park H.-S."/>
            <person name="Seaman C."/>
            <person name="Sougnez C."/>
            <person name="Yang X."/>
            <person name="Zimmer A.R."/>
            <person name="Zody M.C."/>
            <person name="Birren B.W."/>
            <person name="Nusbaum C."/>
            <person name="Fujiyama A."/>
            <person name="Hattori M."/>
            <person name="Rogers J."/>
            <person name="Lander E.S."/>
            <person name="Sakaki Y."/>
        </authorList>
    </citation>
    <scope>NUCLEOTIDE SEQUENCE [LARGE SCALE GENOMIC DNA]</scope>
</reference>
<protein>
    <recommendedName>
        <fullName evidence="1">Protein XNDC1N</fullName>
    </recommendedName>
    <alternativeName>
        <fullName evidence="2">XRCC1 N-terminal domain-containing 1 N-terminal like</fullName>
    </alternativeName>
</protein>
<dbReference type="EMBL" id="AK131288">
    <property type="protein sequence ID" value="BAD18460.1"/>
    <property type="molecule type" value="mRNA"/>
</dbReference>
<dbReference type="EMBL" id="AP000719">
    <property type="status" value="NOT_ANNOTATED_CDS"/>
    <property type="molecule type" value="Genomic_DNA"/>
</dbReference>
<dbReference type="EMBL" id="AP002490">
    <property type="status" value="NOT_ANNOTATED_CDS"/>
    <property type="molecule type" value="Genomic_DNA"/>
</dbReference>
<dbReference type="EMBL" id="AP002495">
    <property type="status" value="NOT_ANNOTATED_CDS"/>
    <property type="molecule type" value="Genomic_DNA"/>
</dbReference>
<dbReference type="CCDS" id="CCDS91528.1">
    <molecule id="Q6ZNB5-1"/>
</dbReference>
<dbReference type="RefSeq" id="NP_001362776.1">
    <molecule id="Q6ZNB5-1"/>
    <property type="nucleotide sequence ID" value="NM_001375847.2"/>
</dbReference>
<dbReference type="SMR" id="Q6ZNB5"/>
<dbReference type="FunCoup" id="Q6ZNB5">
    <property type="interactions" value="22"/>
</dbReference>
<dbReference type="ChEMBL" id="CHEMBL3721310"/>
<dbReference type="iPTMnet" id="Q6ZNB5"/>
<dbReference type="PhosphoSitePlus" id="Q6ZNB5"/>
<dbReference type="BioMuta" id="-"/>
<dbReference type="MassIVE" id="Q6ZNB5"/>
<dbReference type="PaxDb" id="9606-ENSP00000434508"/>
<dbReference type="PeptideAtlas" id="Q6ZNB5"/>
<dbReference type="Antibodypedia" id="66219">
    <property type="antibodies" value="2 antibodies from 1 providers"/>
</dbReference>
<dbReference type="Ensembl" id="ENST00000529844.5">
    <molecule id="Q6ZNB5-2"/>
    <property type="protein sequence ID" value="ENSP00000433080.1"/>
    <property type="gene ID" value="ENSG00000254469.11"/>
</dbReference>
<dbReference type="Ensembl" id="ENST00000679412.2">
    <molecule id="Q6ZNB5-1"/>
    <property type="protein sequence ID" value="ENSP00000506430.1"/>
    <property type="gene ID" value="ENSG00000254469.11"/>
</dbReference>
<dbReference type="GeneID" id="100133315"/>
<dbReference type="MANE-Select" id="ENST00000679412.2">
    <property type="protein sequence ID" value="ENSP00000506430.1"/>
    <property type="RefSeq nucleotide sequence ID" value="NM_001375847.2"/>
    <property type="RefSeq protein sequence ID" value="NP_001362776.1"/>
</dbReference>
<dbReference type="UCSC" id="uc001oqz.3">
    <molecule id="Q6ZNB5-1"/>
    <property type="organism name" value="human"/>
</dbReference>
<dbReference type="AGR" id="HGNC:54661"/>
<dbReference type="GeneCards" id="XNDC1N"/>
<dbReference type="HGNC" id="HGNC:54661">
    <property type="gene designation" value="XNDC1N"/>
</dbReference>
<dbReference type="HPA" id="ENSG00000254469">
    <property type="expression patterns" value="Low tissue specificity"/>
</dbReference>
<dbReference type="neXtProt" id="NX_Q6ZNB5"/>
<dbReference type="OpenTargets" id="ENSG00000254469"/>
<dbReference type="VEuPathDB" id="HostDB:ENSG00000254469"/>
<dbReference type="eggNOG" id="ENOG502RXNH">
    <property type="taxonomic scope" value="Eukaryota"/>
</dbReference>
<dbReference type="GeneTree" id="ENSGT00390000004140"/>
<dbReference type="HOGENOM" id="CLU_2043292_0_0_1"/>
<dbReference type="InParanoid" id="Q6ZNB5"/>
<dbReference type="OMA" id="DWGGWII"/>
<dbReference type="OrthoDB" id="9534056at2759"/>
<dbReference type="PAN-GO" id="Q6ZNB5">
    <property type="GO annotations" value="0 GO annotations based on evolutionary models"/>
</dbReference>
<dbReference type="PhylomeDB" id="Q6ZNB5"/>
<dbReference type="PathwayCommons" id="Q6ZNB5"/>
<dbReference type="Pharos" id="Q6ZNB5">
    <property type="development level" value="Tdark"/>
</dbReference>
<dbReference type="PRO" id="PR:Q6ZNB5"/>
<dbReference type="Proteomes" id="UP000005640">
    <property type="component" value="Chromosome 11"/>
</dbReference>
<dbReference type="RNAct" id="Q6ZNB5">
    <property type="molecule type" value="protein"/>
</dbReference>
<dbReference type="ExpressionAtlas" id="Q6ZNB5">
    <property type="expression patterns" value="baseline and differential"/>
</dbReference>
<dbReference type="GO" id="GO:0005694">
    <property type="term" value="C:chromosome"/>
    <property type="evidence" value="ECO:0000314"/>
    <property type="project" value="HPA"/>
</dbReference>
<dbReference type="GO" id="GO:0005730">
    <property type="term" value="C:nucleolus"/>
    <property type="evidence" value="ECO:0000314"/>
    <property type="project" value="HPA"/>
</dbReference>
<dbReference type="GO" id="GO:0003684">
    <property type="term" value="F:damaged DNA binding"/>
    <property type="evidence" value="ECO:0007669"/>
    <property type="project" value="InterPro"/>
</dbReference>
<dbReference type="GO" id="GO:0000012">
    <property type="term" value="P:single strand break repair"/>
    <property type="evidence" value="ECO:0007669"/>
    <property type="project" value="InterPro"/>
</dbReference>
<dbReference type="FunFam" id="2.60.120.260:FF:000025">
    <property type="entry name" value="DNA repair protein XRCC1 isoform X1"/>
    <property type="match status" value="1"/>
</dbReference>
<dbReference type="Gene3D" id="2.60.120.260">
    <property type="entry name" value="Galactose-binding domain-like"/>
    <property type="match status" value="1"/>
</dbReference>
<dbReference type="InterPro" id="IPR008979">
    <property type="entry name" value="Galactose-bd-like_sf"/>
</dbReference>
<dbReference type="InterPro" id="IPR002706">
    <property type="entry name" value="Xrcc1_N"/>
</dbReference>
<dbReference type="PANTHER" id="PTHR11370">
    <property type="entry name" value="DNA-REPAIR PROTEIN XRCC1"/>
    <property type="match status" value="1"/>
</dbReference>
<dbReference type="PANTHER" id="PTHR11370:SF4">
    <property type="entry name" value="DNA-REPAIR PROTEIN XRCC1 N-TERMINAL DOMAIN-CONTAINING PROTEIN"/>
    <property type="match status" value="1"/>
</dbReference>
<dbReference type="Pfam" id="PF01834">
    <property type="entry name" value="XRCC1_N"/>
    <property type="match status" value="1"/>
</dbReference>
<dbReference type="SUPFAM" id="SSF49785">
    <property type="entry name" value="Galactose-binding domain-like"/>
    <property type="match status" value="1"/>
</dbReference>
<sequence>MAPVKISHVVSFSSQDPKYPVENLLNPDSPRRPWLGCPQDKSGQLKVELQLERAVPTGYIDVGNCGCAFLQIDVGHSSWPLDRPFITLLPATTLMSLTDSKQGKNRSGVRMFKDVDFLAPASGELWDRLRLTCSRPFTRHQSFGLAFLRVCSSLDSLDDSVVGPSALLSSVLNKIREFKTCFFSWSLKKMELEFSPLLLSINLNDLQFAADAEVSTVSNCMFISIALQSAMIIF</sequence>
<comment type="alternative products">
    <event type="alternative splicing"/>
    <isoform>
        <id>Q6ZNB5-1</id>
        <name>1</name>
        <sequence type="displayed"/>
    </isoform>
    <isoform>
        <id>Q6ZNB5-2</id>
        <name>2</name>
        <sequence type="described" ref="VSP_061370 VSP_061371"/>
    </isoform>
</comment>
<keyword id="KW-0025">Alternative splicing</keyword>
<keyword id="KW-1185">Reference proteome</keyword>
<evidence type="ECO:0000305" key="1"/>
<evidence type="ECO:0000312" key="2">
    <source>
        <dbReference type="HGNC" id="HGNC:54661"/>
    </source>
</evidence>
<proteinExistence type="evidence at transcript level"/>
<gene>
    <name evidence="2" type="primary">XNDC1N</name>
</gene>
<organism>
    <name type="scientific">Homo sapiens</name>
    <name type="common">Human</name>
    <dbReference type="NCBI Taxonomy" id="9606"/>
    <lineage>
        <taxon>Eukaryota</taxon>
        <taxon>Metazoa</taxon>
        <taxon>Chordata</taxon>
        <taxon>Craniata</taxon>
        <taxon>Vertebrata</taxon>
        <taxon>Euteleostomi</taxon>
        <taxon>Mammalia</taxon>
        <taxon>Eutheria</taxon>
        <taxon>Euarchontoglires</taxon>
        <taxon>Primates</taxon>
        <taxon>Haplorrhini</taxon>
        <taxon>Catarrhini</taxon>
        <taxon>Hominidae</taxon>
        <taxon>Homo</taxon>
    </lineage>
</organism>
<accession>Q6ZNB5</accession>